<evidence type="ECO:0000250" key="1">
    <source>
        <dbReference type="UniProtKB" id="P06744"/>
    </source>
</evidence>
<evidence type="ECO:0000250" key="2">
    <source>
        <dbReference type="UniProtKB" id="P06745"/>
    </source>
</evidence>
<evidence type="ECO:0000250" key="3">
    <source>
        <dbReference type="UniProtKB" id="P78917"/>
    </source>
</evidence>
<evidence type="ECO:0000269" key="4">
    <source>
    </source>
</evidence>
<evidence type="ECO:0000269" key="5">
    <source>
    </source>
</evidence>
<evidence type="ECO:0000269" key="6">
    <source>
    </source>
</evidence>
<evidence type="ECO:0000305" key="7"/>
<evidence type="ECO:0007744" key="8">
    <source>
    </source>
</evidence>
<evidence type="ECO:0007744" key="9">
    <source>
    </source>
</evidence>
<comment type="function">
    <text evidence="1">In the cytoplasm, catalyzes the conversion of glucose-6-phosphate to fructose-6-phosphate, the second step in glycolysis, and the reverse reaction during gluconeogenesis.</text>
</comment>
<comment type="catalytic activity">
    <reaction evidence="1">
        <text>alpha-D-glucose 6-phosphate = beta-D-fructose 6-phosphate</text>
        <dbReference type="Rhea" id="RHEA:11816"/>
        <dbReference type="ChEBI" id="CHEBI:57634"/>
        <dbReference type="ChEBI" id="CHEBI:58225"/>
        <dbReference type="EC" id="5.3.1.9"/>
    </reaction>
</comment>
<comment type="activity regulation">
    <text evidence="5">Strongly inhibited by the polyol (sugar alcohol) phosphate D-glucitol 6-phosphate (D-sorbitol 6-phosphate) (PubMed:30240188). Also inhibited by the polyol (sugar alcohol) phosphate D-ribitol 5-phosphate (PubMed:30240188).</text>
</comment>
<comment type="pathway">
    <text evidence="7">Carbohydrate degradation; glycolysis; D-glyceraldehyde 3-phosphate and glycerone phosphate from D-glucose: step 2/4.</text>
</comment>
<comment type="subunit">
    <text evidence="1">Homodimer.</text>
</comment>
<comment type="subcellular location">
    <subcellularLocation>
        <location evidence="3">Cytoplasm</location>
        <location evidence="3">Cytosol</location>
    </subcellularLocation>
</comment>
<comment type="miscellaneous">
    <text evidence="4">Present with 91600 molecules/cell in log phase SD medium.</text>
</comment>
<comment type="similarity">
    <text evidence="7">Belongs to the GPI family.</text>
</comment>
<accession>P12709</accession>
<accession>D6VQJ0</accession>
<feature type="initiator methionine" description="Removed" evidence="6">
    <location>
        <position position="1"/>
    </location>
</feature>
<feature type="chain" id="PRO_0000180578" description="Glucose-6-phosphate isomerase">
    <location>
        <begin position="2"/>
        <end position="554"/>
    </location>
</feature>
<feature type="active site" description="Proton donor" evidence="1">
    <location>
        <position position="367"/>
    </location>
</feature>
<feature type="active site" evidence="1">
    <location>
        <position position="398"/>
    </location>
</feature>
<feature type="active site" evidence="1">
    <location>
        <position position="520"/>
    </location>
</feature>
<feature type="binding site" evidence="2">
    <location>
        <begin position="168"/>
        <end position="169"/>
    </location>
    <ligand>
        <name>D-glucose 6-phosphate</name>
        <dbReference type="ChEBI" id="CHEBI:61548"/>
    </ligand>
</feature>
<feature type="binding site" evidence="2">
    <location>
        <begin position="218"/>
        <end position="223"/>
    </location>
    <ligand>
        <name>D-glucose 6-phosphate</name>
        <dbReference type="ChEBI" id="CHEBI:61548"/>
    </ligand>
</feature>
<feature type="binding site" evidence="2">
    <location>
        <position position="363"/>
    </location>
    <ligand>
        <name>D-glucose 6-phosphate</name>
        <dbReference type="ChEBI" id="CHEBI:61548"/>
    </ligand>
</feature>
<feature type="binding site" evidence="2">
    <location>
        <position position="367"/>
    </location>
    <ligand>
        <name>D-glucose 6-phosphate</name>
        <dbReference type="ChEBI" id="CHEBI:61548"/>
    </ligand>
</feature>
<feature type="binding site" evidence="2">
    <location>
        <position position="398"/>
    </location>
    <ligand>
        <name>D-glucose 6-phosphate</name>
        <dbReference type="ChEBI" id="CHEBI:61548"/>
    </ligand>
</feature>
<feature type="binding site" evidence="2">
    <location>
        <position position="520"/>
    </location>
    <ligand>
        <name>D-glucose 6-phosphate</name>
        <dbReference type="ChEBI" id="CHEBI:61548"/>
    </ligand>
</feature>
<feature type="modified residue" description="N-acetylserine" evidence="6">
    <location>
        <position position="2"/>
    </location>
</feature>
<feature type="modified residue" description="Phosphothreonine" evidence="8">
    <location>
        <position position="53"/>
    </location>
</feature>
<feature type="modified residue" description="Phosphothreonine" evidence="9">
    <location>
        <position position="220"/>
    </location>
</feature>
<keyword id="KW-0007">Acetylation</keyword>
<keyword id="KW-0963">Cytoplasm</keyword>
<keyword id="KW-0312">Gluconeogenesis</keyword>
<keyword id="KW-0324">Glycolysis</keyword>
<keyword id="KW-0413">Isomerase</keyword>
<keyword id="KW-0597">Phosphoprotein</keyword>
<keyword id="KW-1185">Reference proteome</keyword>
<proteinExistence type="evidence at protein level"/>
<reference key="1">
    <citation type="journal article" date="1988" name="Gene">
        <title>The isolation, characterization and nucleotide sequence of the phosphoglucoisomerase gene of Saccharomyces cerevisiae.</title>
        <authorList>
            <person name="Tekamp-Olson P."/>
            <person name="Najarian R."/>
            <person name="Burke R.L."/>
        </authorList>
    </citation>
    <scope>NUCLEOTIDE SEQUENCE [GENOMIC DNA]</scope>
</reference>
<reference key="2">
    <citation type="journal article" date="1988" name="Mol. Gen. Genet.">
        <title>The structure and regulation of phosphoglucose isomerase in Saccharomyces cerevisiae.</title>
        <authorList>
            <person name="Green J.B.A."/>
            <person name="Wright A.P.H."/>
            <person name="Cheung W.Y."/>
            <person name="Lancashire W.E."/>
            <person name="Hartley B.S."/>
        </authorList>
    </citation>
    <scope>NUCLEOTIDE SEQUENCE [GENOMIC DNA]</scope>
    <source>
        <strain>ATCC 204510 / AB320</strain>
    </source>
</reference>
<reference key="3">
    <citation type="journal article" date="1993" name="Yeast">
        <title>RIM2, MSI1 and PGI1 are located within an 8 kb segment of Saccharomyces cerevisiae chromosome II, which also contains the putative ribosomal gene L21 and a new putative essential gene with a leucine zipper motif.</title>
        <authorList>
            <person name="Demolis N."/>
            <person name="Mallet L."/>
            <person name="Bussereau F."/>
            <person name="Jacquet M."/>
        </authorList>
    </citation>
    <scope>NUCLEOTIDE SEQUENCE [GENOMIC DNA]</scope>
    <source>
        <strain>ATCC 204508 / S288c</strain>
    </source>
</reference>
<reference key="4">
    <citation type="journal article" date="1994" name="EMBO J.">
        <title>Complete DNA sequence of yeast chromosome II.</title>
        <authorList>
            <person name="Feldmann H."/>
            <person name="Aigle M."/>
            <person name="Aljinovic G."/>
            <person name="Andre B."/>
            <person name="Baclet M.C."/>
            <person name="Barthe C."/>
            <person name="Baur A."/>
            <person name="Becam A.-M."/>
            <person name="Biteau N."/>
            <person name="Boles E."/>
            <person name="Brandt T."/>
            <person name="Brendel M."/>
            <person name="Brueckner M."/>
            <person name="Bussereau F."/>
            <person name="Christiansen C."/>
            <person name="Contreras R."/>
            <person name="Crouzet M."/>
            <person name="Cziepluch C."/>
            <person name="Demolis N."/>
            <person name="Delaveau T."/>
            <person name="Doignon F."/>
            <person name="Domdey H."/>
            <person name="Duesterhus S."/>
            <person name="Dubois E."/>
            <person name="Dujon B."/>
            <person name="El Bakkoury M."/>
            <person name="Entian K.-D."/>
            <person name="Feuermann M."/>
            <person name="Fiers W."/>
            <person name="Fobo G.M."/>
            <person name="Fritz C."/>
            <person name="Gassenhuber J."/>
            <person name="Glansdorff N."/>
            <person name="Goffeau A."/>
            <person name="Grivell L.A."/>
            <person name="de Haan M."/>
            <person name="Hein C."/>
            <person name="Herbert C.J."/>
            <person name="Hollenberg C.P."/>
            <person name="Holmstroem K."/>
            <person name="Jacq C."/>
            <person name="Jacquet M."/>
            <person name="Jauniaux J.-C."/>
            <person name="Jonniaux J.-L."/>
            <person name="Kallesoee T."/>
            <person name="Kiesau P."/>
            <person name="Kirchrath L."/>
            <person name="Koetter P."/>
            <person name="Korol S."/>
            <person name="Liebl S."/>
            <person name="Logghe M."/>
            <person name="Lohan A.J.E."/>
            <person name="Louis E.J."/>
            <person name="Li Z.Y."/>
            <person name="Maat M.J."/>
            <person name="Mallet L."/>
            <person name="Mannhaupt G."/>
            <person name="Messenguy F."/>
            <person name="Miosga T."/>
            <person name="Molemans F."/>
            <person name="Mueller S."/>
            <person name="Nasr F."/>
            <person name="Obermaier B."/>
            <person name="Perea J."/>
            <person name="Pierard A."/>
            <person name="Piravandi E."/>
            <person name="Pohl F.M."/>
            <person name="Pohl T.M."/>
            <person name="Potier S."/>
            <person name="Proft M."/>
            <person name="Purnelle B."/>
            <person name="Ramezani Rad M."/>
            <person name="Rieger M."/>
            <person name="Rose M."/>
            <person name="Schaaff-Gerstenschlaeger I."/>
            <person name="Scherens B."/>
            <person name="Schwarzlose C."/>
            <person name="Skala J."/>
            <person name="Slonimski P.P."/>
            <person name="Smits P.H.M."/>
            <person name="Souciet J.-L."/>
            <person name="Steensma H.Y."/>
            <person name="Stucka R."/>
            <person name="Urrestarazu L.A."/>
            <person name="van der Aart Q.J.M."/>
            <person name="Van Dyck L."/>
            <person name="Vassarotti A."/>
            <person name="Vetter I."/>
            <person name="Vierendeels F."/>
            <person name="Vissers S."/>
            <person name="Wagner G."/>
            <person name="de Wergifosse P."/>
            <person name="Wolfe K.H."/>
            <person name="Zagulski M."/>
            <person name="Zimmermann F.K."/>
            <person name="Mewes H.-W."/>
            <person name="Kleine K."/>
        </authorList>
    </citation>
    <scope>NUCLEOTIDE SEQUENCE [LARGE SCALE GENOMIC DNA]</scope>
    <source>
        <strain>ATCC 204508 / S288c</strain>
    </source>
</reference>
<reference key="5">
    <citation type="journal article" date="2014" name="G3 (Bethesda)">
        <title>The reference genome sequence of Saccharomyces cerevisiae: Then and now.</title>
        <authorList>
            <person name="Engel S.R."/>
            <person name="Dietrich F.S."/>
            <person name="Fisk D.G."/>
            <person name="Binkley G."/>
            <person name="Balakrishnan R."/>
            <person name="Costanzo M.C."/>
            <person name="Dwight S.S."/>
            <person name="Hitz B.C."/>
            <person name="Karra K."/>
            <person name="Nash R.S."/>
            <person name="Weng S."/>
            <person name="Wong E.D."/>
            <person name="Lloyd P."/>
            <person name="Skrzypek M.S."/>
            <person name="Miyasato S.R."/>
            <person name="Simison M."/>
            <person name="Cherry J.M."/>
        </authorList>
    </citation>
    <scope>GENOME REANNOTATION</scope>
    <source>
        <strain>ATCC 204508 / S288c</strain>
    </source>
</reference>
<reference key="6">
    <citation type="journal article" date="1994" name="Yeast">
        <title>Nucleotide sequence analysis of an 11.7 kb fragment of yeast chromosome II including BEM1, a new gene of the WD-40 repeat family and a new member of the KRE2/MNT1 family.</title>
        <authorList>
            <person name="Mallet L."/>
            <person name="Bussereau F."/>
            <person name="Jacquet M."/>
        </authorList>
    </citation>
    <scope>NUCLEOTIDE SEQUENCE [GENOMIC DNA] OF 424-554</scope>
    <source>
        <strain>ATCC 204508 / S288c</strain>
    </source>
</reference>
<reference key="7">
    <citation type="journal article" date="1997" name="Electrophoresis">
        <title>Proteome studies of Saccharomyces cerevisiae: identification and characterization of abundant proteins.</title>
        <authorList>
            <person name="Garrels J.I."/>
            <person name="McLaughlin C.S."/>
            <person name="Warner J.R."/>
            <person name="Futcher B."/>
            <person name="Latter G.I."/>
            <person name="Kobayashi R."/>
            <person name="Schwender B."/>
            <person name="Volpe T."/>
            <person name="Anderson D.S."/>
            <person name="Mesquita-Fuentes R."/>
            <person name="Payne W.E."/>
        </authorList>
    </citation>
    <scope>ACETYLATION AT SER-2</scope>
</reference>
<reference key="8">
    <citation type="journal article" date="2003" name="Nature">
        <title>Global analysis of protein expression in yeast.</title>
        <authorList>
            <person name="Ghaemmaghami S."/>
            <person name="Huh W.-K."/>
            <person name="Bower K."/>
            <person name="Howson R.W."/>
            <person name="Belle A."/>
            <person name="Dephoure N."/>
            <person name="O'Shea E.K."/>
            <person name="Weissman J.S."/>
        </authorList>
    </citation>
    <scope>LEVEL OF PROTEIN EXPRESSION [LARGE SCALE ANALYSIS]</scope>
</reference>
<reference key="9">
    <citation type="journal article" date="2007" name="J. Proteome Res.">
        <title>Large-scale phosphorylation analysis of alpha-factor-arrested Saccharomyces cerevisiae.</title>
        <authorList>
            <person name="Li X."/>
            <person name="Gerber S.A."/>
            <person name="Rudner A.D."/>
            <person name="Beausoleil S.A."/>
            <person name="Haas W."/>
            <person name="Villen J."/>
            <person name="Elias J.E."/>
            <person name="Gygi S.P."/>
        </authorList>
    </citation>
    <scope>IDENTIFICATION BY MASS SPECTROMETRY [LARGE SCALE ANALYSIS]</scope>
    <source>
        <strain>ADR376</strain>
    </source>
</reference>
<reference key="10">
    <citation type="journal article" date="2007" name="Proc. Natl. Acad. Sci. U.S.A.">
        <title>Analysis of phosphorylation sites on proteins from Saccharomyces cerevisiae by electron transfer dissociation (ETD) mass spectrometry.</title>
        <authorList>
            <person name="Chi A."/>
            <person name="Huttenhower C."/>
            <person name="Geer L.Y."/>
            <person name="Coon J.J."/>
            <person name="Syka J.E.P."/>
            <person name="Bai D.L."/>
            <person name="Shabanowitz J."/>
            <person name="Burke D.J."/>
            <person name="Troyanskaya O.G."/>
            <person name="Hunt D.F."/>
        </authorList>
    </citation>
    <scope>IDENTIFICATION BY MASS SPECTROMETRY [LARGE SCALE ANALYSIS]</scope>
</reference>
<reference key="11">
    <citation type="journal article" date="2008" name="Mol. Cell. Proteomics">
        <title>A multidimensional chromatography technology for in-depth phosphoproteome analysis.</title>
        <authorList>
            <person name="Albuquerque C.P."/>
            <person name="Smolka M.B."/>
            <person name="Payne S.H."/>
            <person name="Bafna V."/>
            <person name="Eng J."/>
            <person name="Zhou H."/>
        </authorList>
    </citation>
    <scope>PHOSPHORYLATION [LARGE SCALE ANALYSIS] AT THR-53</scope>
    <scope>IDENTIFICATION BY MASS SPECTROMETRY [LARGE SCALE ANALYSIS]</scope>
</reference>
<reference key="12">
    <citation type="journal article" date="2009" name="Science">
        <title>Global analysis of Cdk1 substrate phosphorylation sites provides insights into evolution.</title>
        <authorList>
            <person name="Holt L.J."/>
            <person name="Tuch B.B."/>
            <person name="Villen J."/>
            <person name="Johnson A.D."/>
            <person name="Gygi S.P."/>
            <person name="Morgan D.O."/>
        </authorList>
    </citation>
    <scope>PHOSPHORYLATION [LARGE SCALE ANALYSIS] AT THR-220</scope>
    <scope>IDENTIFICATION BY MASS SPECTROMETRY [LARGE SCALE ANALYSIS]</scope>
</reference>
<reference key="13">
    <citation type="journal article" date="2018" name="ACS Chem. Biol.">
        <title>Discovery and Functional Characterization of a Yeast Sugar Alcohol Phosphatase.</title>
        <authorList>
            <person name="Xu Y.F."/>
            <person name="Lu W."/>
            <person name="Chen J.C."/>
            <person name="Johnson S.A."/>
            <person name="Gibney P.A."/>
            <person name="Thomas D.G."/>
            <person name="Brown G."/>
            <person name="May A.L."/>
            <person name="Campagna S.R."/>
            <person name="Yakunin A.F."/>
            <person name="Botstein D."/>
            <person name="Rabinowitz J.D."/>
        </authorList>
    </citation>
    <scope>ACTIVITY REGULATION</scope>
</reference>
<protein>
    <recommendedName>
        <fullName>Glucose-6-phosphate isomerase</fullName>
        <shortName>GPI</shortName>
        <ecNumber evidence="1">5.3.1.9</ecNumber>
    </recommendedName>
    <alternativeName>
        <fullName>Phosphoglucose isomerase</fullName>
        <shortName>PGI</shortName>
    </alternativeName>
    <alternativeName>
        <fullName>Phosphohexose isomerase</fullName>
        <shortName>PHI</shortName>
    </alternativeName>
</protein>
<name>G6PI_YEAST</name>
<dbReference type="EC" id="5.3.1.9" evidence="1"/>
<dbReference type="EMBL" id="M37267">
    <property type="protein sequence ID" value="AAA34862.1"/>
    <property type="molecule type" value="Genomic_DNA"/>
</dbReference>
<dbReference type="EMBL" id="M21696">
    <property type="protein sequence ID" value="AAA34894.1"/>
    <property type="molecule type" value="Genomic_DNA"/>
</dbReference>
<dbReference type="EMBL" id="X13977">
    <property type="protein sequence ID" value="CAA32158.1"/>
    <property type="molecule type" value="Genomic_DNA"/>
</dbReference>
<dbReference type="EMBL" id="Z21487">
    <property type="protein sequence ID" value="CAA79683.1"/>
    <property type="molecule type" value="Genomic_DNA"/>
</dbReference>
<dbReference type="EMBL" id="Z36065">
    <property type="protein sequence ID" value="CAA85158.1"/>
    <property type="molecule type" value="Genomic_DNA"/>
</dbReference>
<dbReference type="EMBL" id="BK006936">
    <property type="protein sequence ID" value="DAA07310.1"/>
    <property type="molecule type" value="Genomic_DNA"/>
</dbReference>
<dbReference type="PIR" id="JT0484">
    <property type="entry name" value="NUBY"/>
</dbReference>
<dbReference type="RefSeq" id="NP_009755.1">
    <property type="nucleotide sequence ID" value="NM_001178544.1"/>
</dbReference>
<dbReference type="SMR" id="P12709"/>
<dbReference type="BioGRID" id="32893">
    <property type="interactions" value="194"/>
</dbReference>
<dbReference type="DIP" id="DIP-1605N"/>
<dbReference type="FunCoup" id="P12709">
    <property type="interactions" value="1508"/>
</dbReference>
<dbReference type="IntAct" id="P12709">
    <property type="interactions" value="179"/>
</dbReference>
<dbReference type="MINT" id="P12709"/>
<dbReference type="STRING" id="4932.YBR196C"/>
<dbReference type="ChEMBL" id="CHEMBL1075250"/>
<dbReference type="iPTMnet" id="P12709"/>
<dbReference type="PaxDb" id="4932-YBR196C"/>
<dbReference type="PeptideAtlas" id="P12709"/>
<dbReference type="TopDownProteomics" id="P12709"/>
<dbReference type="EnsemblFungi" id="YBR196C_mRNA">
    <property type="protein sequence ID" value="YBR196C"/>
    <property type="gene ID" value="YBR196C"/>
</dbReference>
<dbReference type="GeneID" id="852495"/>
<dbReference type="KEGG" id="sce:YBR196C"/>
<dbReference type="AGR" id="SGD:S000000400"/>
<dbReference type="SGD" id="S000000400">
    <property type="gene designation" value="PGI1"/>
</dbReference>
<dbReference type="VEuPathDB" id="FungiDB:YBR196C"/>
<dbReference type="eggNOG" id="KOG2446">
    <property type="taxonomic scope" value="Eukaryota"/>
</dbReference>
<dbReference type="GeneTree" id="ENSGT00390000000707"/>
<dbReference type="HOGENOM" id="CLU_017947_3_1_1"/>
<dbReference type="InParanoid" id="P12709"/>
<dbReference type="OMA" id="DWYRQLW"/>
<dbReference type="OrthoDB" id="5831190at2759"/>
<dbReference type="BioCyc" id="MetaCyc:YBR196C-MONOMER"/>
<dbReference type="BioCyc" id="YEAST:YBR196C-MONOMER"/>
<dbReference type="Reactome" id="R-SCE-5628897">
    <property type="pathway name" value="TP53 Regulates Metabolic Genes"/>
</dbReference>
<dbReference type="Reactome" id="R-SCE-6798695">
    <property type="pathway name" value="Neutrophil degranulation"/>
</dbReference>
<dbReference type="Reactome" id="R-SCE-70171">
    <property type="pathway name" value="Glycolysis"/>
</dbReference>
<dbReference type="Reactome" id="R-SCE-70263">
    <property type="pathway name" value="Gluconeogenesis"/>
</dbReference>
<dbReference type="SABIO-RK" id="P12709"/>
<dbReference type="UniPathway" id="UPA00109">
    <property type="reaction ID" value="UER00181"/>
</dbReference>
<dbReference type="BioGRID-ORCS" id="852495">
    <property type="hits" value="6 hits in 10 CRISPR screens"/>
</dbReference>
<dbReference type="PRO" id="PR:P12709"/>
<dbReference type="Proteomes" id="UP000002311">
    <property type="component" value="Chromosome II"/>
</dbReference>
<dbReference type="RNAct" id="P12709">
    <property type="molecule type" value="protein"/>
</dbReference>
<dbReference type="GO" id="GO:0005829">
    <property type="term" value="C:cytosol"/>
    <property type="evidence" value="ECO:0000318"/>
    <property type="project" value="GO_Central"/>
</dbReference>
<dbReference type="GO" id="GO:0005739">
    <property type="term" value="C:mitochondrion"/>
    <property type="evidence" value="ECO:0000314"/>
    <property type="project" value="SGD"/>
</dbReference>
<dbReference type="GO" id="GO:0005886">
    <property type="term" value="C:plasma membrane"/>
    <property type="evidence" value="ECO:0007005"/>
    <property type="project" value="SGD"/>
</dbReference>
<dbReference type="GO" id="GO:0097367">
    <property type="term" value="F:carbohydrate derivative binding"/>
    <property type="evidence" value="ECO:0007669"/>
    <property type="project" value="InterPro"/>
</dbReference>
<dbReference type="GO" id="GO:0004347">
    <property type="term" value="F:glucose-6-phosphate isomerase activity"/>
    <property type="evidence" value="ECO:0000315"/>
    <property type="project" value="SGD"/>
</dbReference>
<dbReference type="GO" id="GO:0048029">
    <property type="term" value="F:monosaccharide binding"/>
    <property type="evidence" value="ECO:0000318"/>
    <property type="project" value="GO_Central"/>
</dbReference>
<dbReference type="GO" id="GO:0006094">
    <property type="term" value="P:gluconeogenesis"/>
    <property type="evidence" value="ECO:0000315"/>
    <property type="project" value="SGD"/>
</dbReference>
<dbReference type="GO" id="GO:0051156">
    <property type="term" value="P:glucose 6-phosphate metabolic process"/>
    <property type="evidence" value="ECO:0000318"/>
    <property type="project" value="GO_Central"/>
</dbReference>
<dbReference type="GO" id="GO:0006096">
    <property type="term" value="P:glycolytic process"/>
    <property type="evidence" value="ECO:0000315"/>
    <property type="project" value="SGD"/>
</dbReference>
<dbReference type="CDD" id="cd05015">
    <property type="entry name" value="SIS_PGI_1"/>
    <property type="match status" value="1"/>
</dbReference>
<dbReference type="CDD" id="cd05016">
    <property type="entry name" value="SIS_PGI_2"/>
    <property type="match status" value="1"/>
</dbReference>
<dbReference type="FunFam" id="1.10.1390.10:FF:000001">
    <property type="entry name" value="Glucose-6-phosphate isomerase"/>
    <property type="match status" value="1"/>
</dbReference>
<dbReference type="FunFam" id="3.40.50.10490:FF:000004">
    <property type="entry name" value="Glucose-6-phosphate isomerase"/>
    <property type="match status" value="1"/>
</dbReference>
<dbReference type="Gene3D" id="1.10.1390.10">
    <property type="match status" value="1"/>
</dbReference>
<dbReference type="Gene3D" id="3.40.50.10490">
    <property type="entry name" value="Glucose-6-phosphate isomerase like protein, domain 1"/>
    <property type="match status" value="2"/>
</dbReference>
<dbReference type="HAMAP" id="MF_00473">
    <property type="entry name" value="G6P_isomerase"/>
    <property type="match status" value="1"/>
</dbReference>
<dbReference type="InterPro" id="IPR001672">
    <property type="entry name" value="G6P_Isomerase"/>
</dbReference>
<dbReference type="InterPro" id="IPR023096">
    <property type="entry name" value="G6P_Isomerase_C"/>
</dbReference>
<dbReference type="InterPro" id="IPR018189">
    <property type="entry name" value="Phosphoglucose_isomerase_CS"/>
</dbReference>
<dbReference type="InterPro" id="IPR046348">
    <property type="entry name" value="SIS_dom_sf"/>
</dbReference>
<dbReference type="InterPro" id="IPR035476">
    <property type="entry name" value="SIS_PGI_1"/>
</dbReference>
<dbReference type="InterPro" id="IPR035482">
    <property type="entry name" value="SIS_PGI_2"/>
</dbReference>
<dbReference type="NCBIfam" id="NF001211">
    <property type="entry name" value="PRK00179.1"/>
    <property type="match status" value="1"/>
</dbReference>
<dbReference type="PANTHER" id="PTHR11469">
    <property type="entry name" value="GLUCOSE-6-PHOSPHATE ISOMERASE"/>
    <property type="match status" value="1"/>
</dbReference>
<dbReference type="PANTHER" id="PTHR11469:SF1">
    <property type="entry name" value="GLUCOSE-6-PHOSPHATE ISOMERASE"/>
    <property type="match status" value="1"/>
</dbReference>
<dbReference type="Pfam" id="PF00342">
    <property type="entry name" value="PGI"/>
    <property type="match status" value="1"/>
</dbReference>
<dbReference type="PRINTS" id="PR00662">
    <property type="entry name" value="G6PISOMERASE"/>
</dbReference>
<dbReference type="SUPFAM" id="SSF53697">
    <property type="entry name" value="SIS domain"/>
    <property type="match status" value="1"/>
</dbReference>
<dbReference type="PROSITE" id="PS00765">
    <property type="entry name" value="P_GLUCOSE_ISOMERASE_1"/>
    <property type="match status" value="1"/>
</dbReference>
<dbReference type="PROSITE" id="PS00174">
    <property type="entry name" value="P_GLUCOSE_ISOMERASE_2"/>
    <property type="match status" value="1"/>
</dbReference>
<dbReference type="PROSITE" id="PS51463">
    <property type="entry name" value="P_GLUCOSE_ISOMERASE_3"/>
    <property type="match status" value="1"/>
</dbReference>
<organism>
    <name type="scientific">Saccharomyces cerevisiae (strain ATCC 204508 / S288c)</name>
    <name type="common">Baker's yeast</name>
    <dbReference type="NCBI Taxonomy" id="559292"/>
    <lineage>
        <taxon>Eukaryota</taxon>
        <taxon>Fungi</taxon>
        <taxon>Dikarya</taxon>
        <taxon>Ascomycota</taxon>
        <taxon>Saccharomycotina</taxon>
        <taxon>Saccharomycetes</taxon>
        <taxon>Saccharomycetales</taxon>
        <taxon>Saccharomycetaceae</taxon>
        <taxon>Saccharomyces</taxon>
    </lineage>
</organism>
<gene>
    <name type="primary">PGI1</name>
    <name type="ordered locus">YBR196C</name>
    <name type="ORF">YBR1406</name>
</gene>
<sequence length="554" mass="61299">MSNNSFTNFKLATELPAWSKLQKIYESQGKTLSVKQEFQKDAKRFEKLNKTFTNYDGSKILFDYSKNLVNDEIIAALIELAKEANVTGLRDAMFKGEHINSTEDRAVYHVALRNRANKPMYVDGVNVAPEVDSVLKHMKEFSEQVRSGEWKGYTGKKITDVVNIGIGGSDLGPVMVTEALKHYAGVLDVHFVSNIDGTHIAETLKVVDPETTLFLIASKTFTTAETITNANTAKNWFLSKTGNDPSHIAKHFAALSTNETEVAKFGIDTKNMFGFESWVGGRYSVWSAIGLSVALYIGYDNFEAFLKGAEAVDNHFTQTPLEDNIPLLGGLLSVWYNNFFGAQTHLVAPFDQYLHRFPAYLQQLSMESNGKSVTRGNVFTDYSTGSILFGEPATNAQHSFFQLVHQGTKLIPSDFILAAQSHNPIENKLHQKMLASNFFAQAEALMVGKDEEQVKAEGATGGLVPHKVFSGNRPTTSILAQKITPATLGALIAYYEHVTFTEGAIWNINSFDQWGVELGKVLAKVIGKELDNSSTISTHDASTNGLINQFKEWM</sequence>